<organism>
    <name type="scientific">Mus musculus</name>
    <name type="common">Mouse</name>
    <dbReference type="NCBI Taxonomy" id="10090"/>
    <lineage>
        <taxon>Eukaryota</taxon>
        <taxon>Metazoa</taxon>
        <taxon>Chordata</taxon>
        <taxon>Craniata</taxon>
        <taxon>Vertebrata</taxon>
        <taxon>Euteleostomi</taxon>
        <taxon>Mammalia</taxon>
        <taxon>Eutheria</taxon>
        <taxon>Euarchontoglires</taxon>
        <taxon>Glires</taxon>
        <taxon>Rodentia</taxon>
        <taxon>Myomorpha</taxon>
        <taxon>Muroidea</taxon>
        <taxon>Muridae</taxon>
        <taxon>Murinae</taxon>
        <taxon>Mus</taxon>
        <taxon>Mus</taxon>
    </lineage>
</organism>
<proteinExistence type="evidence at protein level"/>
<protein>
    <recommendedName>
        <fullName evidence="11">Voltage-gated purine nucleotide uniporter SLC17A9</fullName>
    </recommendedName>
    <alternativeName>
        <fullName evidence="12">Solute carrier family 17 member 9</fullName>
    </alternativeName>
    <alternativeName>
        <fullName evidence="9">Vesicular nucleotide transporter</fullName>
        <shortName evidence="9">VNUT</shortName>
    </alternativeName>
</protein>
<feature type="chain" id="PRO_0000084850" description="Voltage-gated purine nucleotide uniporter SLC17A9">
    <location>
        <begin position="1"/>
        <end position="447"/>
    </location>
</feature>
<feature type="transmembrane region" description="Helical" evidence="2">
    <location>
        <begin position="40"/>
        <end position="60"/>
    </location>
</feature>
<feature type="transmembrane region" description="Helical" evidence="2">
    <location>
        <begin position="74"/>
        <end position="94"/>
    </location>
</feature>
<feature type="transmembrane region" description="Helical" evidence="2">
    <location>
        <begin position="103"/>
        <end position="123"/>
    </location>
</feature>
<feature type="transmembrane region" description="Helical" evidence="2">
    <location>
        <begin position="129"/>
        <end position="149"/>
    </location>
</feature>
<feature type="transmembrane region" description="Helical" evidence="2">
    <location>
        <begin position="169"/>
        <end position="189"/>
    </location>
</feature>
<feature type="transmembrane region" description="Helical" evidence="2">
    <location>
        <begin position="192"/>
        <end position="212"/>
    </location>
</feature>
<feature type="transmembrane region" description="Helical" evidence="2">
    <location>
        <begin position="252"/>
        <end position="272"/>
    </location>
</feature>
<feature type="transmembrane region" description="Helical" evidence="2">
    <location>
        <begin position="287"/>
        <end position="307"/>
    </location>
</feature>
<feature type="transmembrane region" description="Helical" evidence="2">
    <location>
        <begin position="327"/>
        <end position="347"/>
    </location>
</feature>
<feature type="transmembrane region" description="Helical" evidence="2">
    <location>
        <begin position="380"/>
        <end position="400"/>
    </location>
</feature>
<feature type="transmembrane region" description="Helical" evidence="2">
    <location>
        <begin position="413"/>
        <end position="433"/>
    </location>
</feature>
<feature type="region of interest" description="Disordered" evidence="3">
    <location>
        <begin position="1"/>
        <end position="26"/>
    </location>
</feature>
<gene>
    <name evidence="12" type="primary">Slc17a9</name>
</gene>
<keyword id="KW-0968">Cytoplasmic vesicle</keyword>
<keyword id="KW-0458">Lysosome</keyword>
<keyword id="KW-0472">Membrane</keyword>
<keyword id="KW-1185">Reference proteome</keyword>
<keyword id="KW-0812">Transmembrane</keyword>
<keyword id="KW-1133">Transmembrane helix</keyword>
<keyword id="KW-0813">Transport</keyword>
<accession>Q8VCL5</accession>
<accession>A2AJ51</accession>
<name>S17A9_MOUSE</name>
<reference key="1">
    <citation type="journal article" date="2008" name="Proc. Natl. Acad. Sci. U.S.A.">
        <title>Identification of a vesicular nucleotide transporter.</title>
        <authorList>
            <person name="Sawada K."/>
            <person name="Echigo N."/>
            <person name="Juge N."/>
            <person name="Miyaji T."/>
            <person name="Otsuka M."/>
            <person name="Omote H."/>
            <person name="Yamamoto A."/>
            <person name="Moriyama Y."/>
        </authorList>
    </citation>
    <scope>NUCLEOTIDE SEQUENCE [MRNA]</scope>
    <scope>SUBCELLULAR LOCATION</scope>
    <scope>TISSUE SPECIFICITY</scope>
</reference>
<reference key="2">
    <citation type="journal article" date="2009" name="PLoS Biol.">
        <title>Lineage-specific biology revealed by a finished genome assembly of the mouse.</title>
        <authorList>
            <person name="Church D.M."/>
            <person name="Goodstadt L."/>
            <person name="Hillier L.W."/>
            <person name="Zody M.C."/>
            <person name="Goldstein S."/>
            <person name="She X."/>
            <person name="Bult C.J."/>
            <person name="Agarwala R."/>
            <person name="Cherry J.L."/>
            <person name="DiCuccio M."/>
            <person name="Hlavina W."/>
            <person name="Kapustin Y."/>
            <person name="Meric P."/>
            <person name="Maglott D."/>
            <person name="Birtle Z."/>
            <person name="Marques A.C."/>
            <person name="Graves T."/>
            <person name="Zhou S."/>
            <person name="Teague B."/>
            <person name="Potamousis K."/>
            <person name="Churas C."/>
            <person name="Place M."/>
            <person name="Herschleb J."/>
            <person name="Runnheim R."/>
            <person name="Forrest D."/>
            <person name="Amos-Landgraf J."/>
            <person name="Schwartz D.C."/>
            <person name="Cheng Z."/>
            <person name="Lindblad-Toh K."/>
            <person name="Eichler E.E."/>
            <person name="Ponting C.P."/>
        </authorList>
    </citation>
    <scope>NUCLEOTIDE SEQUENCE [LARGE SCALE GENOMIC DNA]</scope>
    <source>
        <strain>C57BL/6J</strain>
    </source>
</reference>
<reference key="3">
    <citation type="journal article" date="2013" name="Biochem. Biophys. Res. Commun.">
        <title>Vesicular nucleotide transporter is involved in ATP storage of secretory lysosomes in astrocytes.</title>
        <authorList>
            <person name="Oya M."/>
            <person name="Kitaguchi T."/>
            <person name="Yanagihara Y."/>
            <person name="Numano R."/>
            <person name="Kakeyama M."/>
            <person name="Ikematsu K."/>
            <person name="Tsuboi T."/>
        </authorList>
    </citation>
    <scope>FUNCTION</scope>
    <scope>TRANSPORTER ACTIVITY</scope>
    <scope>SUBCELLULAR LOCATION</scope>
</reference>
<reference key="4">
    <citation type="journal article" date="2013" name="Glia">
        <title>Microglia release ATP by exocytosis.</title>
        <authorList>
            <person name="Imura Y."/>
            <person name="Morizawa Y."/>
            <person name="Komatsu R."/>
            <person name="Shibata K."/>
            <person name="Shinozaki Y."/>
            <person name="Kasai H."/>
            <person name="Moriishi K."/>
            <person name="Moriyama Y."/>
            <person name="Koizumi S."/>
        </authorList>
    </citation>
    <scope>FUNCTION</scope>
</reference>
<reference key="5">
    <citation type="journal article" date="2014" name="J. Biol. Chem.">
        <title>SLC17A9 protein functions as a lysosomal ATP transporter and regulates cell viability.</title>
        <authorList>
            <person name="Cao Q."/>
            <person name="Zhao K."/>
            <person name="Zhong X.Z."/>
            <person name="Zou Y."/>
            <person name="Yu H."/>
            <person name="Huang P."/>
            <person name="Xu T.L."/>
            <person name="Dong X.P."/>
        </authorList>
    </citation>
    <scope>FUNCTION</scope>
    <scope>TRANSPORTER ACTIVITY</scope>
    <scope>SUBCELLULAR LOCATION</scope>
</reference>
<reference key="6">
    <citation type="journal article" date="2016" name="J. Physiol. (Lond.)">
        <title>Activation of lysosomal P2X4 by ATP transported into lysosomes via VNUT/SLC17A9 using V-ATPase generated voltage gradient as the driving force.</title>
        <authorList>
            <person name="Zhong X.Z."/>
            <person name="Cao Q."/>
            <person name="Sun X."/>
            <person name="Dong X.P."/>
        </authorList>
    </citation>
    <scope>FUNCTION</scope>
    <scope>TRANSPORTER ACTIVITY</scope>
</reference>
<dbReference type="EMBL" id="AL732560">
    <property type="status" value="NOT_ANNOTATED_CDS"/>
    <property type="molecule type" value="Genomic_DNA"/>
</dbReference>
<dbReference type="CCDS" id="CCDS38378.1"/>
<dbReference type="RefSeq" id="NP_898984.3">
    <property type="nucleotide sequence ID" value="NM_183161.3"/>
</dbReference>
<dbReference type="SMR" id="Q8VCL5"/>
<dbReference type="BioGRID" id="230803">
    <property type="interactions" value="1"/>
</dbReference>
<dbReference type="FunCoup" id="Q8VCL5">
    <property type="interactions" value="145"/>
</dbReference>
<dbReference type="IntAct" id="Q8VCL5">
    <property type="interactions" value="1"/>
</dbReference>
<dbReference type="STRING" id="10090.ENSMUSP00000091771"/>
<dbReference type="PhosphoSitePlus" id="Q8VCL5"/>
<dbReference type="PaxDb" id="10090-ENSMUSP00000091771"/>
<dbReference type="ProteomicsDB" id="255447"/>
<dbReference type="Antibodypedia" id="66400">
    <property type="antibodies" value="22 antibodies from 8 providers"/>
</dbReference>
<dbReference type="DNASU" id="228993"/>
<dbReference type="Ensembl" id="ENSMUST00000094218.4">
    <property type="protein sequence ID" value="ENSMUSP00000091771.4"/>
    <property type="gene ID" value="ENSMUSG00000023393.16"/>
</dbReference>
<dbReference type="GeneID" id="228993"/>
<dbReference type="KEGG" id="mmu:228993"/>
<dbReference type="UCSC" id="uc008oka.1">
    <property type="organism name" value="mouse"/>
</dbReference>
<dbReference type="AGR" id="MGI:1919107"/>
<dbReference type="CTD" id="63910"/>
<dbReference type="MGI" id="MGI:1919107">
    <property type="gene designation" value="Slc17a9"/>
</dbReference>
<dbReference type="VEuPathDB" id="HostDB:ENSMUSG00000023393"/>
<dbReference type="eggNOG" id="KOG2532">
    <property type="taxonomic scope" value="Eukaryota"/>
</dbReference>
<dbReference type="GeneTree" id="ENSGT00940000158186"/>
<dbReference type="HOGENOM" id="CLU_001265_5_11_1"/>
<dbReference type="InParanoid" id="Q8VCL5"/>
<dbReference type="OMA" id="LITFWMP"/>
<dbReference type="OrthoDB" id="2985014at2759"/>
<dbReference type="PhylomeDB" id="Q8VCL5"/>
<dbReference type="TreeFam" id="TF313341"/>
<dbReference type="BioGRID-ORCS" id="228993">
    <property type="hits" value="3 hits in 78 CRISPR screens"/>
</dbReference>
<dbReference type="ChiTaRS" id="Slc17a9">
    <property type="organism name" value="mouse"/>
</dbReference>
<dbReference type="PRO" id="PR:Q8VCL5"/>
<dbReference type="Proteomes" id="UP000000589">
    <property type="component" value="Chromosome 2"/>
</dbReference>
<dbReference type="RNAct" id="Q8VCL5">
    <property type="molecule type" value="protein"/>
</dbReference>
<dbReference type="Bgee" id="ENSMUSG00000023393">
    <property type="expression patterns" value="Expressed in granulocyte and 110 other cell types or tissues"/>
</dbReference>
<dbReference type="GO" id="GO:0042584">
    <property type="term" value="C:chromaffin granule membrane"/>
    <property type="evidence" value="ECO:0000314"/>
    <property type="project" value="MGI"/>
</dbReference>
<dbReference type="GO" id="GO:0005765">
    <property type="term" value="C:lysosomal membrane"/>
    <property type="evidence" value="ECO:0000314"/>
    <property type="project" value="UniProtKB"/>
</dbReference>
<dbReference type="GO" id="GO:0098594">
    <property type="term" value="C:mucin granule"/>
    <property type="evidence" value="ECO:0007669"/>
    <property type="project" value="Ensembl"/>
</dbReference>
<dbReference type="GO" id="GO:0030141">
    <property type="term" value="C:secretory granule"/>
    <property type="evidence" value="ECO:0000314"/>
    <property type="project" value="MGI"/>
</dbReference>
<dbReference type="GO" id="GO:0030658">
    <property type="term" value="C:transport vesicle membrane"/>
    <property type="evidence" value="ECO:0007669"/>
    <property type="project" value="UniProtKB-SubCell"/>
</dbReference>
<dbReference type="GO" id="GO:0015217">
    <property type="term" value="F:ADP transmembrane transporter activity"/>
    <property type="evidence" value="ECO:0000266"/>
    <property type="project" value="MGI"/>
</dbReference>
<dbReference type="GO" id="GO:0005347">
    <property type="term" value="F:ATP transmembrane transporter activity"/>
    <property type="evidence" value="ECO:0000266"/>
    <property type="project" value="MGI"/>
</dbReference>
<dbReference type="GO" id="GO:0001409">
    <property type="term" value="F:guanine nucleotide transmembrane transporter activity"/>
    <property type="evidence" value="ECO:0000266"/>
    <property type="project" value="MGI"/>
</dbReference>
<dbReference type="GO" id="GO:0160042">
    <property type="term" value="F:purine nucleotide uniporter activity"/>
    <property type="evidence" value="ECO:0000314"/>
    <property type="project" value="UniProtKB"/>
</dbReference>
<dbReference type="GO" id="GO:0015866">
    <property type="term" value="P:ADP transport"/>
    <property type="evidence" value="ECO:0000266"/>
    <property type="project" value="MGI"/>
</dbReference>
<dbReference type="GO" id="GO:1904669">
    <property type="term" value="P:ATP export"/>
    <property type="evidence" value="ECO:0000315"/>
    <property type="project" value="UniProtKB"/>
</dbReference>
<dbReference type="GO" id="GO:0015867">
    <property type="term" value="P:ATP transport"/>
    <property type="evidence" value="ECO:0000266"/>
    <property type="project" value="MGI"/>
</dbReference>
<dbReference type="GO" id="GO:1903790">
    <property type="term" value="P:guanine nucleotide transmembrane transport"/>
    <property type="evidence" value="ECO:0000266"/>
    <property type="project" value="MGI"/>
</dbReference>
<dbReference type="GO" id="GO:1905146">
    <property type="term" value="P:lysosomal protein catabolic process"/>
    <property type="evidence" value="ECO:0000315"/>
    <property type="project" value="UniProtKB"/>
</dbReference>
<dbReference type="GO" id="GO:0141013">
    <property type="term" value="P:purine nucleotide import into lysosome"/>
    <property type="evidence" value="ECO:0000314"/>
    <property type="project" value="UniProtKB"/>
</dbReference>
<dbReference type="CDD" id="cd17380">
    <property type="entry name" value="MFS_SLC17A9_like"/>
    <property type="match status" value="1"/>
</dbReference>
<dbReference type="FunFam" id="1.20.1250.20:FF:000059">
    <property type="entry name" value="Solute carrier family 17 member 9"/>
    <property type="match status" value="1"/>
</dbReference>
<dbReference type="FunFam" id="1.20.1250.20:FF:000150">
    <property type="entry name" value="Solute carrier family 17 member 9"/>
    <property type="match status" value="1"/>
</dbReference>
<dbReference type="Gene3D" id="1.20.1250.20">
    <property type="entry name" value="MFS general substrate transporter like domains"/>
    <property type="match status" value="2"/>
</dbReference>
<dbReference type="InterPro" id="IPR011701">
    <property type="entry name" value="MFS"/>
</dbReference>
<dbReference type="InterPro" id="IPR020846">
    <property type="entry name" value="MFS_dom"/>
</dbReference>
<dbReference type="InterPro" id="IPR050382">
    <property type="entry name" value="MFS_Na/Anion_cotransporter"/>
</dbReference>
<dbReference type="InterPro" id="IPR036259">
    <property type="entry name" value="MFS_trans_sf"/>
</dbReference>
<dbReference type="InterPro" id="IPR044777">
    <property type="entry name" value="SLC17A9-like"/>
</dbReference>
<dbReference type="InterPro" id="IPR005829">
    <property type="entry name" value="Sugar_transporter_CS"/>
</dbReference>
<dbReference type="PANTHER" id="PTHR11662">
    <property type="entry name" value="SOLUTE CARRIER FAMILY 17"/>
    <property type="match status" value="1"/>
</dbReference>
<dbReference type="PANTHER" id="PTHR11662:SF279">
    <property type="entry name" value="VOLTAGE-GATED PURINE NUCLEOTIDE UNIPORTER SLC17A9"/>
    <property type="match status" value="1"/>
</dbReference>
<dbReference type="Pfam" id="PF07690">
    <property type="entry name" value="MFS_1"/>
    <property type="match status" value="1"/>
</dbReference>
<dbReference type="SUPFAM" id="SSF103473">
    <property type="entry name" value="MFS general substrate transporter"/>
    <property type="match status" value="1"/>
</dbReference>
<dbReference type="PROSITE" id="PS50850">
    <property type="entry name" value="MFS"/>
    <property type="match status" value="1"/>
</dbReference>
<dbReference type="PROSITE" id="PS00217">
    <property type="entry name" value="SUGAR_TRANSPORT_2"/>
    <property type="match status" value="1"/>
</dbReference>
<comment type="function">
    <text evidence="1 5 6 7 8">Voltage-gated ATP nucleotide uniporter that can also transport the purine nucleotides ADP and GTP. Uses the membrane potential as the driving force to control ATP accumulation in lysosomes and secretory vesicles (PubMed:23876310, PubMed:24962569, PubMed:27477609). By controlling ATP storage in lysosomes, regulates ATP-dependent proteins of these organelles (PubMed:23832620, PubMed:24962569, PubMed:27477609). Also indirectly regulates the exocytosis of ATP through its import into lysosomes in astrocytes and secretory vesicles such as adrenal chromaffin granules, mucin granules and synaptic vesicles (By similarity).</text>
</comment>
<comment type="catalytic activity">
    <reaction evidence="6 7 8">
        <text>ATP(in) = ATP(out)</text>
        <dbReference type="Rhea" id="RHEA:75687"/>
        <dbReference type="ChEBI" id="CHEBI:30616"/>
    </reaction>
</comment>
<comment type="catalytic activity">
    <reaction evidence="1">
        <text>ADP(in) = ADP(out)</text>
        <dbReference type="Rhea" id="RHEA:75783"/>
        <dbReference type="ChEBI" id="CHEBI:456216"/>
    </reaction>
</comment>
<comment type="catalytic activity">
    <reaction evidence="1">
        <text>GTP(in) = GTP(out)</text>
        <dbReference type="Rhea" id="RHEA:75787"/>
        <dbReference type="ChEBI" id="CHEBI:37565"/>
    </reaction>
</comment>
<comment type="activity regulation">
    <text evidence="1">Activity is chloride-dependent.</text>
</comment>
<comment type="subcellular location">
    <subcellularLocation>
        <location evidence="4">Cytoplasmic vesicle</location>
        <location evidence="4">Secretory vesicle</location>
        <location evidence="4">Chromaffin granule membrane</location>
        <topology evidence="2">Multi-pass membrane protein</topology>
    </subcellularLocation>
    <subcellularLocation>
        <location evidence="4">Cytoplasmic vesicle</location>
        <location evidence="4">Secretory vesicle membrane</location>
        <topology evidence="2">Multi-pass membrane protein</topology>
    </subcellularLocation>
    <subcellularLocation>
        <location evidence="6 7">Lysosome membrane</location>
        <topology evidence="2">Multi-pass membrane protein</topology>
    </subcellularLocation>
    <text evidence="1">Localizes to mucin granules and vesicles.</text>
</comment>
<comment type="tissue specificity">
    <text evidence="4">In brain, specifically expressed in the medulla and is associated with chromaffin granules (at protein level). Predominantly expressed in adrenal gland, brain and thyroid.</text>
</comment>
<comment type="similarity">
    <text evidence="10">Belongs to the major facilitator superfamily. Sodium/anion cotransporter family.</text>
</comment>
<sequence>MPSQRSSLMQPIPEETRKTPSAAAEDTRWSRPECQAWTGILLLGTCLLYCARVTMPVCTVAMSQDFGWNKKEAGIVLSSFFWGYCLTQVVGGHLGDRIGGEKVILLSASAWGFITVTTPLLAHLGSGHLAFLTFSRILTGLLQGVYFPALTSLLSQKVQESERAFTYSTVGAGSQVGTLVTGGVGSVLLDQCGWQSVFYFSGGLTLLWAYYVYRYLLNEKDLVLALGFLAQGLPVTKPSKVPWRQLFRKASVWAAICSQLCSACSFFILLSWLPTFFKETFPNSKGWVFNVVPWMLAIPASLFSGFISDRLISQGYRVITVRKFMQVMGLGLSSIFALCLGHTTSFLKAMIFASASIGFQTFNHSGISVNIQDLAPSCAGFLFGVANTAGALAGVVGVCLSGYLIETTGSWTCVFHLVAIISNLGLGTFLVFGKAQRVDLVPTHEDL</sequence>
<evidence type="ECO:0000250" key="1">
    <source>
        <dbReference type="UniProtKB" id="Q9BYT1"/>
    </source>
</evidence>
<evidence type="ECO:0000255" key="2"/>
<evidence type="ECO:0000256" key="3">
    <source>
        <dbReference type="SAM" id="MobiDB-lite"/>
    </source>
</evidence>
<evidence type="ECO:0000269" key="4">
    <source>
    </source>
</evidence>
<evidence type="ECO:0000269" key="5">
    <source>
    </source>
</evidence>
<evidence type="ECO:0000269" key="6">
    <source>
    </source>
</evidence>
<evidence type="ECO:0000269" key="7">
    <source>
    </source>
</evidence>
<evidence type="ECO:0000269" key="8">
    <source>
    </source>
</evidence>
<evidence type="ECO:0000303" key="9">
    <source>
    </source>
</evidence>
<evidence type="ECO:0000305" key="10"/>
<evidence type="ECO:0000305" key="11">
    <source>
    </source>
</evidence>
<evidence type="ECO:0000312" key="12">
    <source>
        <dbReference type="MGI" id="MGI:1919107"/>
    </source>
</evidence>